<keyword id="KW-0067">ATP-binding</keyword>
<keyword id="KW-0169">Cobalamin biosynthesis</keyword>
<keyword id="KW-0963">Cytoplasm</keyword>
<keyword id="KW-0436">Ligase</keyword>
<keyword id="KW-0547">Nucleotide-binding</keyword>
<keyword id="KW-0627">Porphyrin biosynthesis</keyword>
<evidence type="ECO:0000305" key="1"/>
<organism>
    <name type="scientific">Sinorhizobium sp</name>
    <dbReference type="NCBI Taxonomy" id="42445"/>
    <lineage>
        <taxon>Bacteria</taxon>
        <taxon>Pseudomonadati</taxon>
        <taxon>Pseudomonadota</taxon>
        <taxon>Alphaproteobacteria</taxon>
        <taxon>Hyphomicrobiales</taxon>
        <taxon>Rhizobiaceae</taxon>
        <taxon>Sinorhizobium/Ensifer group</taxon>
        <taxon>Sinorhizobium</taxon>
    </lineage>
</organism>
<comment type="function">
    <text>Catalyzes cobalt insertion in the corrin ring.</text>
</comment>
<comment type="catalytic activity">
    <reaction>
        <text>hydrogenobyrinate a,c-diamide + Co(2+) + ATP + H2O = cob(II)yrinate a,c diamide + ADP + phosphate + 5 H(+)</text>
        <dbReference type="Rhea" id="RHEA:15341"/>
        <dbReference type="ChEBI" id="CHEBI:15377"/>
        <dbReference type="ChEBI" id="CHEBI:15378"/>
        <dbReference type="ChEBI" id="CHEBI:30616"/>
        <dbReference type="ChEBI" id="CHEBI:43474"/>
        <dbReference type="ChEBI" id="CHEBI:48828"/>
        <dbReference type="ChEBI" id="CHEBI:58537"/>
        <dbReference type="ChEBI" id="CHEBI:77874"/>
        <dbReference type="ChEBI" id="CHEBI:456216"/>
        <dbReference type="EC" id="6.6.1.2"/>
    </reaction>
</comment>
<comment type="pathway">
    <text>Cofactor biosynthesis; adenosylcobalamin biosynthesis; cob(II)yrinate a,c-diamide from precorrin-2 (aerobic route): step 10/10.</text>
</comment>
<comment type="subunit">
    <text>Heterotrimer of CobN, CobS and CobT.</text>
</comment>
<comment type="subcellular location">
    <subcellularLocation>
        <location evidence="1">Cytoplasm</location>
    </subcellularLocation>
</comment>
<comment type="similarity">
    <text evidence="1">Belongs to the CobN family.</text>
</comment>
<comment type="caution">
    <text evidence="1">Was originally thought to originate from Pseudomonas denitrificans, but similarity searches show that the sequence is much closer to Sinorhizobium. The entry's taxonomy has been changed.</text>
</comment>
<protein>
    <recommendedName>
        <fullName>Aerobic cobaltochelatase subunit CobN</fullName>
        <ecNumber>6.6.1.2</ecNumber>
    </recommendedName>
    <alternativeName>
        <fullName>Hydrogenobyrinic acid a,c-diamide cobaltochelatase subunit CobN</fullName>
    </alternativeName>
</protein>
<sequence>MHLLLAQKGTIADGNEAIDLGQTPADILFLSAADTELSSIAAAHGRRDGGLSLRIASLMSLMHPMSVDTYVERTARHAKLIVVRPLGGASYFRYLLEALHAAAVTHRFEIAVLPGDDKPDPGLEPFSTVAADDRQRLWAYFTEGGSDNAGLFLDYAAALVTGAEKPQPAKPLLKAGIWWPGAGVIGVSEWQSLVQGRMVAREGFEPPTVGICFYRALVQSGETRPVEALIDALEAEGVRALPVFVSSLKDAVSVGTLQAIFSEAAPDVVMNATGFAVSSPGADRQPTVLESTGAPVLQVIFSGSSRAQWETSPQGLMARDLAMNVALPEVDGRILARAVSFKAASIYDAKVEANIVGHEPLEGRVRFAADLAVNWANVRRAEPAERRIAIVMANYPNRDGRLGNGVGLDTPAGTVEVLSAMAREGYAVGEVPADGDALIRFLMAGPTNAASHDREIRERISLNDYKTFFDSLPKQIKDEVAGRWGVPEADPFFLDGAFALPLARFGEVIVGIQPARGYNIDPKESYHSPDLVPPHGYLAFYAFLRQQFGAQAIVHMGKHGNLEWLPGKALALSETCYPEAIFGPLPHIYPFIVNDPGEGTQAKRRTSAVIIDHLTPPLTRAESYGPLKDLEALVDEYYDAAGGDPRRLRLLSRQILDLVRDIGLDSDAGIDRGDSDDKALEKLDAYLCDLKEMQIRDGLHIFGVAPEGRLLTDLTVALARVPRGLGEGGDQSLQRAIAADAGLRGFAIPTSAGGNPARDAQPFDPLDCVMSDTWTGPKPSILADLSDAPWRTAGDTVERIELLAANLVSGELACPDHWANTRAVLGEIETRLKPSISNSGAAEMTGFLTGLSGRFVAPGPSGAPTRGRPDVLPTGRNFYSVDSRAVPTPAAYELGKKSAELLIRRYLQDHGEWPSSFGLTAWGTANMRTGGDDIAQALALIGAKPTWDMVSRRVMGYEIVPLAVLGRPRVDVTLRISGFFRDAFPDQIALFDKAIRAVALEEDDADNMIAARMRAESRRLEAEGVEAAEAARRASYRVFGAKPGAYGAALQALIDEKGWETKADLAEAYLTWGAYAYGAGEEGKAERDLFEERLRTIEAVVQNQDNREHDLLDSDDYYQFEGGMSAAAEQLGGHRPAIYHNDHSRPEKPVIRSLEEEIGRVVRARVVNPKWIDGVMRHGYKGAFEIAATVDYMFAFAATTGAVRDHHFEAAYQAFIVDERVADFMRDKNPAAFAELAERLLEAIDRNLWTPRSNSARFELAGIGTAATRLRAGNE</sequence>
<gene>
    <name type="primary">cobN</name>
</gene>
<reference key="1">
    <citation type="journal article" date="1991" name="J. Bacteriol.">
        <title>Nucleotide sequence and genetic analysis of a 13.1-kilobase-pair Pseudomonas denitrificans DNA fragment containing five cob genes and identification of structural genes encoding Cob(I)alamin adenosyltransferase, cobyric acid synthase, and bifunctional cobinamide kinase-cobinamide phosphate guanylyltransferase.</title>
        <authorList>
            <person name="Crouzet J."/>
            <person name="Levy-Schil S."/>
            <person name="Cameron B."/>
            <person name="Cauchois L."/>
            <person name="Rigault S."/>
            <person name="Rouyez M.-C."/>
            <person name="Blanche F."/>
            <person name="Debussche L."/>
            <person name="Thibaut D."/>
        </authorList>
    </citation>
    <scope>NUCLEOTIDE SEQUENCE [GENOMIC DNA]</scope>
    <source>
        <strain>SC510</strain>
    </source>
</reference>
<reference key="2">
    <citation type="journal article" date="1992" name="J. Bacteriol.">
        <title>Assay, purification, and characterization of cobaltochelatase, a unique complex enzyme catalyzing cobalt insertion in hydrogenobyrinic acid a,c-diamide during coenzyme B12 biosynthesis in Pseudomonas denitrificans.</title>
        <authorList>
            <person name="Debussche L."/>
            <person name="Couder M."/>
            <person name="Thibaut D."/>
            <person name="Cameron B."/>
            <person name="Crouzet J."/>
            <person name="Blanche F."/>
        </authorList>
    </citation>
    <scope>CHARACTERIZATION</scope>
</reference>
<name>COBN_SINSX</name>
<feature type="chain" id="PRO_0000089991" description="Aerobic cobaltochelatase subunit CobN">
    <location>
        <begin position="1"/>
        <end position="1275"/>
    </location>
</feature>
<accession>P29929</accession>
<dbReference type="EC" id="6.6.1.2"/>
<dbReference type="EMBL" id="M62866">
    <property type="protein sequence ID" value="AAA25780.1"/>
    <property type="molecule type" value="Genomic_DNA"/>
</dbReference>
<dbReference type="SMR" id="P29929"/>
<dbReference type="KEGG" id="ag:AAA25780"/>
<dbReference type="BioCyc" id="MetaCyc:MONOMER-121"/>
<dbReference type="BRENDA" id="6.6.1.2">
    <property type="organism ID" value="5114"/>
</dbReference>
<dbReference type="UniPathway" id="UPA00148">
    <property type="reaction ID" value="UER00221"/>
</dbReference>
<dbReference type="GO" id="GO:0005737">
    <property type="term" value="C:cytoplasm"/>
    <property type="evidence" value="ECO:0007669"/>
    <property type="project" value="UniProtKB-SubCell"/>
</dbReference>
<dbReference type="GO" id="GO:0005524">
    <property type="term" value="F:ATP binding"/>
    <property type="evidence" value="ECO:0007669"/>
    <property type="project" value="UniProtKB-KW"/>
</dbReference>
<dbReference type="GO" id="GO:0051116">
    <property type="term" value="F:cobaltochelatase activity"/>
    <property type="evidence" value="ECO:0007669"/>
    <property type="project" value="UniProtKB-EC"/>
</dbReference>
<dbReference type="GO" id="GO:0009236">
    <property type="term" value="P:cobalamin biosynthetic process"/>
    <property type="evidence" value="ECO:0007669"/>
    <property type="project" value="UniProtKB-UniPathway"/>
</dbReference>
<dbReference type="GO" id="GO:0006779">
    <property type="term" value="P:porphyrin-containing compound biosynthetic process"/>
    <property type="evidence" value="ECO:0007669"/>
    <property type="project" value="UniProtKB-KW"/>
</dbReference>
<dbReference type="CDD" id="cd10150">
    <property type="entry name" value="CobN_like"/>
    <property type="match status" value="1"/>
</dbReference>
<dbReference type="InterPro" id="IPR011953">
    <property type="entry name" value="Cobalto_CobN"/>
</dbReference>
<dbReference type="InterPro" id="IPR003672">
    <property type="entry name" value="CobN/Mg_chltase"/>
</dbReference>
<dbReference type="NCBIfam" id="TIGR02257">
    <property type="entry name" value="cobalto_cobN"/>
    <property type="match status" value="1"/>
</dbReference>
<dbReference type="PANTHER" id="PTHR44119:SF4">
    <property type="entry name" value="AEROBIC COBALTOCHELATASE SUBUNIT COBN"/>
    <property type="match status" value="1"/>
</dbReference>
<dbReference type="PANTHER" id="PTHR44119">
    <property type="entry name" value="MAGNESIUM-CHELATASE SUBUNIT CHLH, CHLOROPLASTIC"/>
    <property type="match status" value="1"/>
</dbReference>
<dbReference type="Pfam" id="PF02514">
    <property type="entry name" value="CobN-Mg_chel"/>
    <property type="match status" value="1"/>
</dbReference>
<proteinExistence type="evidence at protein level"/>